<organism>
    <name type="scientific">Buchnera aphidicola subsp. Cinara cedri (strain Cc)</name>
    <dbReference type="NCBI Taxonomy" id="372461"/>
    <lineage>
        <taxon>Bacteria</taxon>
        <taxon>Pseudomonadati</taxon>
        <taxon>Pseudomonadota</taxon>
        <taxon>Gammaproteobacteria</taxon>
        <taxon>Enterobacterales</taxon>
        <taxon>Erwiniaceae</taxon>
        <taxon>Buchnera</taxon>
    </lineage>
</organism>
<accession>Q057W6</accession>
<evidence type="ECO:0000255" key="1">
    <source>
        <dbReference type="HAMAP-Rule" id="MF_01456"/>
    </source>
</evidence>
<comment type="function">
    <text evidence="1">NDH-1 shuttles electrons from NADH, via FMN and iron-sulfur (Fe-S) centers, to quinones in the respiratory chain. The immediate electron acceptor for the enzyme in this species is believed to be ubiquinone. Couples the redox reaction to proton translocation (for every two electrons transferred, four hydrogen ions are translocated across the cytoplasmic membrane), and thus conserves the redox energy in a proton gradient.</text>
</comment>
<comment type="catalytic activity">
    <reaction evidence="1">
        <text>a quinone + NADH + 5 H(+)(in) = a quinol + NAD(+) + 4 H(+)(out)</text>
        <dbReference type="Rhea" id="RHEA:57888"/>
        <dbReference type="ChEBI" id="CHEBI:15378"/>
        <dbReference type="ChEBI" id="CHEBI:24646"/>
        <dbReference type="ChEBI" id="CHEBI:57540"/>
        <dbReference type="ChEBI" id="CHEBI:57945"/>
        <dbReference type="ChEBI" id="CHEBI:132124"/>
    </reaction>
</comment>
<comment type="subunit">
    <text evidence="1">NDH-1 is composed of 13 different subunits. Subunits NuoA, H, J, K, L, M, N constitute the membrane sector of the complex.</text>
</comment>
<comment type="subcellular location">
    <subcellularLocation>
        <location evidence="1">Cell membrane</location>
        <topology evidence="1">Multi-pass membrane protein</topology>
    </subcellularLocation>
</comment>
<comment type="similarity">
    <text evidence="1">Belongs to the complex I subunit 4L family.</text>
</comment>
<proteinExistence type="inferred from homology"/>
<keyword id="KW-1003">Cell membrane</keyword>
<keyword id="KW-0472">Membrane</keyword>
<keyword id="KW-0520">NAD</keyword>
<keyword id="KW-0874">Quinone</keyword>
<keyword id="KW-1185">Reference proteome</keyword>
<keyword id="KW-1278">Translocase</keyword>
<keyword id="KW-0812">Transmembrane</keyword>
<keyword id="KW-1133">Transmembrane helix</keyword>
<keyword id="KW-0813">Transport</keyword>
<keyword id="KW-0830">Ubiquinone</keyword>
<protein>
    <recommendedName>
        <fullName evidence="1">NADH-quinone oxidoreductase subunit K</fullName>
        <ecNumber evidence="1">7.1.1.-</ecNumber>
    </recommendedName>
    <alternativeName>
        <fullName evidence="1">NADH dehydrogenase I subunit K</fullName>
    </alternativeName>
    <alternativeName>
        <fullName evidence="1">NDH-1 subunit K</fullName>
    </alternativeName>
</protein>
<name>NUOK_BUCCC</name>
<reference key="1">
    <citation type="journal article" date="2006" name="Science">
        <title>A small microbial genome: the end of a long symbiotic relationship?</title>
        <authorList>
            <person name="Perez-Brocal V."/>
            <person name="Gil R."/>
            <person name="Ramos S."/>
            <person name="Lamelas A."/>
            <person name="Postigo M."/>
            <person name="Michelena J.M."/>
            <person name="Silva F.J."/>
            <person name="Moya A."/>
            <person name="Latorre A."/>
        </authorList>
    </citation>
    <scope>NUCLEOTIDE SEQUENCE [LARGE SCALE GENOMIC DNA]</scope>
    <source>
        <strain>Cc</strain>
    </source>
</reference>
<gene>
    <name evidence="1" type="primary">nuoK</name>
    <name type="ordered locus">BCc_106</name>
</gene>
<sequence>MLSLNYGFTISIILFFIGIISLLIHKNLIFILVSLEVLINSIILGFILIGKYWKQIDCCVLYIFIVTIATVEVSVMLAIFLRIYQRYHTLDIYKLREISK</sequence>
<feature type="chain" id="PRO_0000389981" description="NADH-quinone oxidoreductase subunit K">
    <location>
        <begin position="1"/>
        <end position="100"/>
    </location>
</feature>
<feature type="transmembrane region" description="Helical" evidence="1">
    <location>
        <begin position="4"/>
        <end position="24"/>
    </location>
</feature>
<feature type="transmembrane region" description="Helical" evidence="1">
    <location>
        <begin position="29"/>
        <end position="49"/>
    </location>
</feature>
<feature type="transmembrane region" description="Helical" evidence="1">
    <location>
        <begin position="60"/>
        <end position="80"/>
    </location>
</feature>
<dbReference type="EC" id="7.1.1.-" evidence="1"/>
<dbReference type="EMBL" id="CP000263">
    <property type="protein sequence ID" value="ABJ90583.1"/>
    <property type="molecule type" value="Genomic_DNA"/>
</dbReference>
<dbReference type="RefSeq" id="WP_011672502.1">
    <property type="nucleotide sequence ID" value="NC_008513.1"/>
</dbReference>
<dbReference type="SMR" id="Q057W6"/>
<dbReference type="STRING" id="372461.BCc_106"/>
<dbReference type="KEGG" id="bcc:BCc_106"/>
<dbReference type="eggNOG" id="COG0713">
    <property type="taxonomic scope" value="Bacteria"/>
</dbReference>
<dbReference type="HOGENOM" id="CLU_144724_0_1_6"/>
<dbReference type="OrthoDB" id="9801357at2"/>
<dbReference type="Proteomes" id="UP000000669">
    <property type="component" value="Chromosome"/>
</dbReference>
<dbReference type="GO" id="GO:0030964">
    <property type="term" value="C:NADH dehydrogenase complex"/>
    <property type="evidence" value="ECO:0007669"/>
    <property type="project" value="TreeGrafter"/>
</dbReference>
<dbReference type="GO" id="GO:0005886">
    <property type="term" value="C:plasma membrane"/>
    <property type="evidence" value="ECO:0007669"/>
    <property type="project" value="UniProtKB-SubCell"/>
</dbReference>
<dbReference type="GO" id="GO:0050136">
    <property type="term" value="F:NADH:ubiquinone reductase (non-electrogenic) activity"/>
    <property type="evidence" value="ECO:0007669"/>
    <property type="project" value="UniProtKB-UniRule"/>
</dbReference>
<dbReference type="GO" id="GO:0048038">
    <property type="term" value="F:quinone binding"/>
    <property type="evidence" value="ECO:0007669"/>
    <property type="project" value="UniProtKB-KW"/>
</dbReference>
<dbReference type="GO" id="GO:0042773">
    <property type="term" value="P:ATP synthesis coupled electron transport"/>
    <property type="evidence" value="ECO:0007669"/>
    <property type="project" value="InterPro"/>
</dbReference>
<dbReference type="Gene3D" id="1.10.287.3510">
    <property type="match status" value="1"/>
</dbReference>
<dbReference type="HAMAP" id="MF_01456">
    <property type="entry name" value="NDH1_NuoK"/>
    <property type="match status" value="1"/>
</dbReference>
<dbReference type="InterPro" id="IPR001133">
    <property type="entry name" value="NADH_UbQ_OxRdtase_chain4L/K"/>
</dbReference>
<dbReference type="InterPro" id="IPR039428">
    <property type="entry name" value="NUOK/Mnh_C1-like"/>
</dbReference>
<dbReference type="NCBIfam" id="NF004320">
    <property type="entry name" value="PRK05715.1-2"/>
    <property type="match status" value="1"/>
</dbReference>
<dbReference type="PANTHER" id="PTHR11434:SF16">
    <property type="entry name" value="NADH-UBIQUINONE OXIDOREDUCTASE CHAIN 4L"/>
    <property type="match status" value="1"/>
</dbReference>
<dbReference type="PANTHER" id="PTHR11434">
    <property type="entry name" value="NADH-UBIQUINONE OXIDOREDUCTASE SUBUNIT ND4L"/>
    <property type="match status" value="1"/>
</dbReference>
<dbReference type="Pfam" id="PF00420">
    <property type="entry name" value="Oxidored_q2"/>
    <property type="match status" value="1"/>
</dbReference>